<accession>Q08E40</accession>
<gene>
    <name evidence="1" type="primary">SLC39A12</name>
    <name type="synonym">ZIP12</name>
</gene>
<evidence type="ECO:0000250" key="1">
    <source>
        <dbReference type="UniProtKB" id="Q504Y0"/>
    </source>
</evidence>
<evidence type="ECO:0000250" key="2">
    <source>
        <dbReference type="UniProtKB" id="Q5FWH7"/>
    </source>
</evidence>
<evidence type="ECO:0000255" key="3"/>
<evidence type="ECO:0000305" key="4"/>
<proteinExistence type="evidence at transcript level"/>
<feature type="chain" id="PRO_0000312496" description="Zinc transporter ZIP12">
    <location>
        <begin position="1"/>
        <end position="654"/>
    </location>
</feature>
<feature type="topological domain" description="Extracellular" evidence="3">
    <location>
        <begin position="1"/>
        <end position="202"/>
    </location>
</feature>
<feature type="transmembrane region" description="Helical" evidence="3">
    <location>
        <begin position="203"/>
        <end position="223"/>
    </location>
</feature>
<feature type="topological domain" description="Cytoplasmic" evidence="3">
    <location>
        <begin position="224"/>
        <end position="369"/>
    </location>
</feature>
<feature type="transmembrane region" description="Helical" evidence="3">
    <location>
        <begin position="370"/>
        <end position="390"/>
    </location>
</feature>
<feature type="topological domain" description="Extracellular" evidence="3">
    <location>
        <begin position="391"/>
        <end position="398"/>
    </location>
</feature>
<feature type="transmembrane region" description="Helical" evidence="3">
    <location>
        <begin position="399"/>
        <end position="419"/>
    </location>
</feature>
<feature type="topological domain" description="Cytoplasmic" evidence="3">
    <location>
        <begin position="420"/>
        <end position="448"/>
    </location>
</feature>
<feature type="transmembrane region" description="Helical" evidence="3">
    <location>
        <begin position="449"/>
        <end position="469"/>
    </location>
</feature>
<feature type="topological domain" description="Extracellular" evidence="3">
    <location>
        <begin position="470"/>
        <end position="501"/>
    </location>
</feature>
<feature type="transmembrane region" description="Helical" evidence="3">
    <location>
        <begin position="502"/>
        <end position="522"/>
    </location>
</feature>
<feature type="topological domain" description="Cytoplasmic" evidence="3">
    <location>
        <begin position="523"/>
        <end position="563"/>
    </location>
</feature>
<feature type="transmembrane region" description="Helical" evidence="3">
    <location>
        <begin position="564"/>
        <end position="584"/>
    </location>
</feature>
<feature type="topological domain" description="Extracellular" evidence="3">
    <location>
        <begin position="585"/>
        <end position="594"/>
    </location>
</feature>
<feature type="transmembrane region" description="Helical" evidence="3">
    <location>
        <begin position="595"/>
        <end position="615"/>
    </location>
</feature>
<feature type="topological domain" description="Cytoplasmic" evidence="3">
    <location>
        <begin position="616"/>
        <end position="626"/>
    </location>
</feature>
<feature type="transmembrane region" description="Helical" evidence="3">
    <location>
        <begin position="627"/>
        <end position="647"/>
    </location>
</feature>
<feature type="topological domain" description="Extracellular" evidence="3">
    <location>
        <begin position="648"/>
        <end position="654"/>
    </location>
</feature>
<feature type="short sequence motif" description="XEXPHE-motif">
    <location>
        <begin position="543"/>
        <end position="548"/>
    </location>
</feature>
<feature type="glycosylation site" description="N-linked (GlcNAc...) asparagine" evidence="3">
    <location>
        <position position="59"/>
    </location>
</feature>
<feature type="glycosylation site" description="N-linked (GlcNAc...) asparagine" evidence="3">
    <location>
        <position position="162"/>
    </location>
</feature>
<name>S39AC_BOVIN</name>
<reference key="1">
    <citation type="submission" date="2006-09" db="EMBL/GenBank/DDBJ databases">
        <authorList>
            <consortium name="NIH - Mammalian Gene Collection (MGC) project"/>
        </authorList>
    </citation>
    <scope>NUCLEOTIDE SEQUENCE [LARGE SCALE MRNA]</scope>
    <source>
        <strain>Hereford</strain>
        <tissue>Thalamus</tissue>
    </source>
</reference>
<dbReference type="EMBL" id="BC123434">
    <property type="protein sequence ID" value="AAI23435.1"/>
    <property type="molecule type" value="mRNA"/>
</dbReference>
<dbReference type="RefSeq" id="NP_001070346.1">
    <property type="nucleotide sequence ID" value="NM_001076878.1"/>
</dbReference>
<dbReference type="RefSeq" id="XP_010809425.1">
    <property type="nucleotide sequence ID" value="XM_010811123.2"/>
</dbReference>
<dbReference type="RefSeq" id="XP_010809426.1">
    <property type="nucleotide sequence ID" value="XM_010811124.2"/>
</dbReference>
<dbReference type="RefSeq" id="XP_024856420.1">
    <property type="nucleotide sequence ID" value="XM_025000652.2"/>
</dbReference>
<dbReference type="SMR" id="Q08E40"/>
<dbReference type="FunCoup" id="Q08E40">
    <property type="interactions" value="305"/>
</dbReference>
<dbReference type="STRING" id="9913.ENSBTAP00000020631"/>
<dbReference type="GlyCosmos" id="Q08E40">
    <property type="glycosylation" value="2 sites, No reported glycans"/>
</dbReference>
<dbReference type="GlyGen" id="Q08E40">
    <property type="glycosylation" value="2 sites"/>
</dbReference>
<dbReference type="PaxDb" id="9913-ENSBTAP00000020631"/>
<dbReference type="GeneID" id="527210"/>
<dbReference type="KEGG" id="bta:527210"/>
<dbReference type="CTD" id="221074"/>
<dbReference type="VEuPathDB" id="HostDB:ENSBTAG00000015525"/>
<dbReference type="eggNOG" id="KOG2693">
    <property type="taxonomic scope" value="Eukaryota"/>
</dbReference>
<dbReference type="HOGENOM" id="CLU_015114_12_1_1"/>
<dbReference type="InParanoid" id="Q08E40"/>
<dbReference type="OMA" id="DMCEKCL"/>
<dbReference type="OrthoDB" id="200954at2759"/>
<dbReference type="TreeFam" id="TF318470"/>
<dbReference type="Proteomes" id="UP000009136">
    <property type="component" value="Chromosome 13"/>
</dbReference>
<dbReference type="GO" id="GO:0005886">
    <property type="term" value="C:plasma membrane"/>
    <property type="evidence" value="ECO:0000318"/>
    <property type="project" value="GO_Central"/>
</dbReference>
<dbReference type="GO" id="GO:0140410">
    <property type="term" value="F:monoatomic cation:bicarbonate symporter activity"/>
    <property type="evidence" value="ECO:0000318"/>
    <property type="project" value="GO_Central"/>
</dbReference>
<dbReference type="GO" id="GO:0005385">
    <property type="term" value="F:zinc ion transmembrane transporter activity"/>
    <property type="evidence" value="ECO:0000250"/>
    <property type="project" value="UniProtKB"/>
</dbReference>
<dbReference type="GO" id="GO:0030003">
    <property type="term" value="P:intracellular monoatomic cation homeostasis"/>
    <property type="evidence" value="ECO:0000318"/>
    <property type="project" value="GO_Central"/>
</dbReference>
<dbReference type="GO" id="GO:0001841">
    <property type="term" value="P:neural tube formation"/>
    <property type="evidence" value="ECO:0000250"/>
    <property type="project" value="UniProtKB"/>
</dbReference>
<dbReference type="GO" id="GO:1990138">
    <property type="term" value="P:neuron projection extension"/>
    <property type="evidence" value="ECO:0000250"/>
    <property type="project" value="UniProtKB"/>
</dbReference>
<dbReference type="GO" id="GO:0071578">
    <property type="term" value="P:zinc ion import across plasma membrane"/>
    <property type="evidence" value="ECO:0000250"/>
    <property type="project" value="UniProtKB"/>
</dbReference>
<dbReference type="InterPro" id="IPR003689">
    <property type="entry name" value="ZIP"/>
</dbReference>
<dbReference type="InterPro" id="IPR049406">
    <property type="entry name" value="ZIP4_12_EF-hand"/>
</dbReference>
<dbReference type="InterPro" id="IPR041137">
    <property type="entry name" value="ZIP4_N"/>
</dbReference>
<dbReference type="InterPro" id="IPR050799">
    <property type="entry name" value="ZIP_Transporter"/>
</dbReference>
<dbReference type="PANTHER" id="PTHR12191">
    <property type="entry name" value="SOLUTE CARRIER FAMILY 39"/>
    <property type="match status" value="1"/>
</dbReference>
<dbReference type="PANTHER" id="PTHR12191:SF4">
    <property type="entry name" value="ZINC TRANSPORTER ZIP12"/>
    <property type="match status" value="1"/>
</dbReference>
<dbReference type="Pfam" id="PF21116">
    <property type="entry name" value="EF-hand_Zip"/>
    <property type="match status" value="1"/>
</dbReference>
<dbReference type="Pfam" id="PF02535">
    <property type="entry name" value="Zip"/>
    <property type="match status" value="1"/>
</dbReference>
<dbReference type="Pfam" id="PF18292">
    <property type="entry name" value="ZIP4_domain"/>
    <property type="match status" value="1"/>
</dbReference>
<comment type="function">
    <text evidence="2">Uniporter that promotes Zn(2+) import from the extracellular space to the cytoplasm across the cell membrane. The transport activity is temperature dependent. May play a role in neurulation and neurite extension. May play a key role in maintaining intracellular zinc content at levels that reduce the inhibitory effects of rises in oxidative stress on spermatogonia and spermatozoa viability during spermatogenesis.</text>
</comment>
<comment type="catalytic activity">
    <reaction evidence="2">
        <text>Zn(2+)(in) = Zn(2+)(out)</text>
        <dbReference type="Rhea" id="RHEA:29351"/>
        <dbReference type="ChEBI" id="CHEBI:29105"/>
    </reaction>
</comment>
<comment type="subcellular location">
    <subcellularLocation>
        <location evidence="2">Membrane</location>
        <topology evidence="3">Multi-pass membrane protein</topology>
    </subcellularLocation>
    <text evidence="2">At low Zn(2+) extracellular concentration, is redistributed from the perinuclear space to the cytoplasm and plasma membrane.</text>
</comment>
<comment type="similarity">
    <text evidence="4">Belongs to the ZIP transporter (TC 2.A.5) family.</text>
</comment>
<protein>
    <recommendedName>
        <fullName evidence="2">Zinc transporter ZIP12</fullName>
    </recommendedName>
    <alternativeName>
        <fullName>Solute carrier family 39 member 12</fullName>
    </alternativeName>
    <alternativeName>
        <fullName>Zrt- and Irt-like protein 12</fullName>
        <shortName>ZIP-12</shortName>
    </alternativeName>
</protein>
<organism>
    <name type="scientific">Bos taurus</name>
    <name type="common">Bovine</name>
    <dbReference type="NCBI Taxonomy" id="9913"/>
    <lineage>
        <taxon>Eukaryota</taxon>
        <taxon>Metazoa</taxon>
        <taxon>Chordata</taxon>
        <taxon>Craniata</taxon>
        <taxon>Vertebrata</taxon>
        <taxon>Euteleostomi</taxon>
        <taxon>Mammalia</taxon>
        <taxon>Eutheria</taxon>
        <taxon>Laurasiatheria</taxon>
        <taxon>Artiodactyla</taxon>
        <taxon>Ruminantia</taxon>
        <taxon>Pecora</taxon>
        <taxon>Bovidae</taxon>
        <taxon>Bovinae</taxon>
        <taxon>Bos</taxon>
    </lineage>
</organism>
<sequence length="654" mass="72783">MCFWTKPSVSWVSLFLLLSLDPSTETEKPSTQDSSSTWSPGQLTEVLRVLSADDPRPLNHSRSLIRTLLEKTGCPRRTDGRQGDCNLCFEPDALLLIAGGDFEDQLKEEVIQRVSLLLLYYIIHQEEICSSKLNMSNKEYTFYLHSLLSLRQDEDSYFLSQNETEDILAFTRQYFDTSRNQCMETKVLQKKSGILSSDGADENTLPQLAATIIALSLQGVCLGQRNLPPPDYFTEYIFSALNSTNTLHLSELDKLLNTLWTKSTCIRKDKIHQLRRKQNSLTLHDGDYSNLSVSMDPESEDGPISWDQTCFSAGQLVNIFLQNKLSPISKEDFKQMSPGIIQQLLSCSCQLPQNQQAKIAPTTLEKYGYSTVAVTLLTLGSMLGTTLILFHSCEENYRLILQLFVGLAVGTLSGDALLHLIPQILGLHMQETSEFGHFYENKGHIWKLLGLIGGIHGFFLIEKCFTLLVSPGAKKGPEDAQAAEIPIPSVNTPNRKCKTISLLAIMILVGDSLHNFADGLVIGAAFSSSSEAGVTTTIAILCHEIPHEMGDFAVLLSSGLPVKIAILMNFISALTAFIGLYIGLSVSTDPCIQNWILTVTAGMFLYLSLVEMLPEMTHVQTQRPWLMFLLQNFGLTLGWLSLFLLAIYEQNIKI</sequence>
<keyword id="KW-0325">Glycoprotein</keyword>
<keyword id="KW-0406">Ion transport</keyword>
<keyword id="KW-0472">Membrane</keyword>
<keyword id="KW-1185">Reference proteome</keyword>
<keyword id="KW-0812">Transmembrane</keyword>
<keyword id="KW-1133">Transmembrane helix</keyword>
<keyword id="KW-0813">Transport</keyword>
<keyword id="KW-0862">Zinc</keyword>
<keyword id="KW-0864">Zinc transport</keyword>